<reference key="1">
    <citation type="submission" date="2006-05" db="EMBL/GenBank/DDBJ databases">
        <title>Complete sequence of chromosome of Silicibacter sp. TM1040.</title>
        <authorList>
            <consortium name="US DOE Joint Genome Institute"/>
            <person name="Copeland A."/>
            <person name="Lucas S."/>
            <person name="Lapidus A."/>
            <person name="Barry K."/>
            <person name="Detter J.C."/>
            <person name="Glavina del Rio T."/>
            <person name="Hammon N."/>
            <person name="Israni S."/>
            <person name="Dalin E."/>
            <person name="Tice H."/>
            <person name="Pitluck S."/>
            <person name="Brettin T."/>
            <person name="Bruce D."/>
            <person name="Han C."/>
            <person name="Tapia R."/>
            <person name="Goodwin L."/>
            <person name="Thompson L.S."/>
            <person name="Gilna P."/>
            <person name="Schmutz J."/>
            <person name="Larimer F."/>
            <person name="Land M."/>
            <person name="Hauser L."/>
            <person name="Kyrpides N."/>
            <person name="Kim E."/>
            <person name="Belas R."/>
            <person name="Moran M.A."/>
            <person name="Buchan A."/>
            <person name="Gonzalez J.M."/>
            <person name="Schell M.A."/>
            <person name="Sun F."/>
            <person name="Richardson P."/>
        </authorList>
    </citation>
    <scope>NUCLEOTIDE SEQUENCE [LARGE SCALE GENOMIC DNA]</scope>
    <source>
        <strain>TM1040</strain>
    </source>
</reference>
<keyword id="KW-0227">DNA damage</keyword>
<keyword id="KW-0233">DNA recombination</keyword>
<keyword id="KW-0234">DNA repair</keyword>
<keyword id="KW-0479">Metal-binding</keyword>
<keyword id="KW-1185">Reference proteome</keyword>
<keyword id="KW-0862">Zinc</keyword>
<keyword id="KW-0863">Zinc-finger</keyword>
<dbReference type="EMBL" id="CP000377">
    <property type="protein sequence ID" value="ABF62897.1"/>
    <property type="molecule type" value="Genomic_DNA"/>
</dbReference>
<dbReference type="RefSeq" id="WP_011537532.1">
    <property type="nucleotide sequence ID" value="NC_008044.1"/>
</dbReference>
<dbReference type="SMR" id="Q1GKB9"/>
<dbReference type="STRING" id="292414.TM1040_0164"/>
<dbReference type="KEGG" id="sit:TM1040_0164"/>
<dbReference type="eggNOG" id="COG0353">
    <property type="taxonomic scope" value="Bacteria"/>
</dbReference>
<dbReference type="HOGENOM" id="CLU_060739_1_0_5"/>
<dbReference type="OrthoDB" id="9802672at2"/>
<dbReference type="Proteomes" id="UP000000636">
    <property type="component" value="Chromosome"/>
</dbReference>
<dbReference type="GO" id="GO:0003677">
    <property type="term" value="F:DNA binding"/>
    <property type="evidence" value="ECO:0007669"/>
    <property type="project" value="UniProtKB-UniRule"/>
</dbReference>
<dbReference type="GO" id="GO:0008270">
    <property type="term" value="F:zinc ion binding"/>
    <property type="evidence" value="ECO:0007669"/>
    <property type="project" value="UniProtKB-KW"/>
</dbReference>
<dbReference type="GO" id="GO:0006310">
    <property type="term" value="P:DNA recombination"/>
    <property type="evidence" value="ECO:0007669"/>
    <property type="project" value="UniProtKB-UniRule"/>
</dbReference>
<dbReference type="GO" id="GO:0006281">
    <property type="term" value="P:DNA repair"/>
    <property type="evidence" value="ECO:0007669"/>
    <property type="project" value="UniProtKB-UniRule"/>
</dbReference>
<dbReference type="CDD" id="cd01025">
    <property type="entry name" value="TOPRIM_recR"/>
    <property type="match status" value="1"/>
</dbReference>
<dbReference type="Gene3D" id="3.40.1360.10">
    <property type="match status" value="1"/>
</dbReference>
<dbReference type="Gene3D" id="6.10.250.240">
    <property type="match status" value="1"/>
</dbReference>
<dbReference type="Gene3D" id="1.10.8.420">
    <property type="entry name" value="RecR Domain 1"/>
    <property type="match status" value="1"/>
</dbReference>
<dbReference type="HAMAP" id="MF_00017">
    <property type="entry name" value="RecR"/>
    <property type="match status" value="1"/>
</dbReference>
<dbReference type="InterPro" id="IPR000093">
    <property type="entry name" value="DNA_Rcmb_RecR"/>
</dbReference>
<dbReference type="InterPro" id="IPR023627">
    <property type="entry name" value="Rcmb_RecR"/>
</dbReference>
<dbReference type="InterPro" id="IPR006171">
    <property type="entry name" value="TOPRIM_dom"/>
</dbReference>
<dbReference type="InterPro" id="IPR034137">
    <property type="entry name" value="TOPRIM_RecR"/>
</dbReference>
<dbReference type="NCBIfam" id="TIGR00615">
    <property type="entry name" value="recR"/>
    <property type="match status" value="1"/>
</dbReference>
<dbReference type="PANTHER" id="PTHR30446">
    <property type="entry name" value="RECOMBINATION PROTEIN RECR"/>
    <property type="match status" value="1"/>
</dbReference>
<dbReference type="PANTHER" id="PTHR30446:SF0">
    <property type="entry name" value="RECOMBINATION PROTEIN RECR"/>
    <property type="match status" value="1"/>
</dbReference>
<dbReference type="Pfam" id="PF21175">
    <property type="entry name" value="RecR_C"/>
    <property type="match status" value="1"/>
</dbReference>
<dbReference type="Pfam" id="PF21176">
    <property type="entry name" value="RecR_HhH"/>
    <property type="match status" value="1"/>
</dbReference>
<dbReference type="Pfam" id="PF13662">
    <property type="entry name" value="Toprim_4"/>
    <property type="match status" value="1"/>
</dbReference>
<dbReference type="SMART" id="SM00493">
    <property type="entry name" value="TOPRIM"/>
    <property type="match status" value="1"/>
</dbReference>
<dbReference type="SUPFAM" id="SSF111304">
    <property type="entry name" value="Recombination protein RecR"/>
    <property type="match status" value="1"/>
</dbReference>
<dbReference type="PROSITE" id="PS50880">
    <property type="entry name" value="TOPRIM"/>
    <property type="match status" value="1"/>
</dbReference>
<organism>
    <name type="scientific">Ruegeria sp. (strain TM1040)</name>
    <name type="common">Silicibacter sp.</name>
    <dbReference type="NCBI Taxonomy" id="292414"/>
    <lineage>
        <taxon>Bacteria</taxon>
        <taxon>Pseudomonadati</taxon>
        <taxon>Pseudomonadota</taxon>
        <taxon>Alphaproteobacteria</taxon>
        <taxon>Rhodobacterales</taxon>
        <taxon>Roseobacteraceae</taxon>
        <taxon>Ruegeria</taxon>
    </lineage>
</organism>
<accession>Q1GKB9</accession>
<evidence type="ECO:0000255" key="1">
    <source>
        <dbReference type="HAMAP-Rule" id="MF_00017"/>
    </source>
</evidence>
<feature type="chain" id="PRO_0000322953" description="Recombination protein RecR">
    <location>
        <begin position="1"/>
        <end position="199"/>
    </location>
</feature>
<feature type="domain" description="Toprim" evidence="1">
    <location>
        <begin position="82"/>
        <end position="176"/>
    </location>
</feature>
<feature type="zinc finger region" description="C4-type" evidence="1">
    <location>
        <begin position="59"/>
        <end position="74"/>
    </location>
</feature>
<name>RECR_RUEST</name>
<protein>
    <recommendedName>
        <fullName evidence="1">Recombination protein RecR</fullName>
    </recommendedName>
</protein>
<gene>
    <name evidence="1" type="primary">recR</name>
    <name type="ordered locus">TM1040_0164</name>
</gene>
<comment type="function">
    <text evidence="1">May play a role in DNA repair. It seems to be involved in an RecBC-independent recombinational process of DNA repair. It may act with RecF and RecO.</text>
</comment>
<comment type="similarity">
    <text evidence="1">Belongs to the RecR family.</text>
</comment>
<proteinExistence type="inferred from homology"/>
<sequence length="199" mass="21162">MAAQDNSDIEALIALMAKLPGLGPRSARRAVLHLIRKRALVLTPLADAMSRVAETARECLNCGNVGTSDICALCEDETRANGELCVVEDVADLWAMERAGVFKGRYHVLGGTLSALDAIGPEDLRIPRLVDRVSTEGVSEVILALNATIDGQTTAHYIADQLSGRVKLTSLAQGVPIGGELDYLDDGTISAALRARKEI</sequence>